<gene>
    <name evidence="1" type="primary">coaX</name>
    <name type="ordered locus">SAR11_0899</name>
</gene>
<comment type="function">
    <text evidence="1">Catalyzes the phosphorylation of pantothenate (Pan), the first step in CoA biosynthesis.</text>
</comment>
<comment type="catalytic activity">
    <reaction evidence="1">
        <text>(R)-pantothenate + ATP = (R)-4'-phosphopantothenate + ADP + H(+)</text>
        <dbReference type="Rhea" id="RHEA:16373"/>
        <dbReference type="ChEBI" id="CHEBI:10986"/>
        <dbReference type="ChEBI" id="CHEBI:15378"/>
        <dbReference type="ChEBI" id="CHEBI:29032"/>
        <dbReference type="ChEBI" id="CHEBI:30616"/>
        <dbReference type="ChEBI" id="CHEBI:456216"/>
        <dbReference type="EC" id="2.7.1.33"/>
    </reaction>
</comment>
<comment type="cofactor">
    <cofactor evidence="1">
        <name>NH4(+)</name>
        <dbReference type="ChEBI" id="CHEBI:28938"/>
    </cofactor>
    <cofactor evidence="1">
        <name>K(+)</name>
        <dbReference type="ChEBI" id="CHEBI:29103"/>
    </cofactor>
    <text evidence="1">A monovalent cation. Ammonium or potassium.</text>
</comment>
<comment type="pathway">
    <text evidence="1">Cofactor biosynthesis; coenzyme A biosynthesis; CoA from (R)-pantothenate: step 1/5.</text>
</comment>
<comment type="subunit">
    <text evidence="1">Homodimer.</text>
</comment>
<comment type="subcellular location">
    <subcellularLocation>
        <location evidence="1">Cytoplasm</location>
    </subcellularLocation>
</comment>
<comment type="similarity">
    <text evidence="1">Belongs to the type III pantothenate kinase family.</text>
</comment>
<name>COAX_PELUB</name>
<feature type="chain" id="PRO_0000267572" description="Type III pantothenate kinase">
    <location>
        <begin position="1"/>
        <end position="248"/>
    </location>
</feature>
<feature type="active site" description="Proton acceptor" evidence="1">
    <location>
        <position position="105"/>
    </location>
</feature>
<feature type="binding site" evidence="1">
    <location>
        <begin position="6"/>
        <end position="13"/>
    </location>
    <ligand>
        <name>ATP</name>
        <dbReference type="ChEBI" id="CHEBI:30616"/>
    </ligand>
</feature>
<feature type="binding site" evidence="1">
    <location>
        <begin position="103"/>
        <end position="106"/>
    </location>
    <ligand>
        <name>substrate</name>
    </ligand>
</feature>
<feature type="binding site" evidence="1">
    <location>
        <position position="124"/>
    </location>
    <ligand>
        <name>K(+)</name>
        <dbReference type="ChEBI" id="CHEBI:29103"/>
    </ligand>
</feature>
<feature type="binding site" evidence="1">
    <location>
        <position position="127"/>
    </location>
    <ligand>
        <name>ATP</name>
        <dbReference type="ChEBI" id="CHEBI:30616"/>
    </ligand>
</feature>
<feature type="binding site" evidence="1">
    <location>
        <position position="178"/>
    </location>
    <ligand>
        <name>substrate</name>
    </ligand>
</feature>
<accession>Q4FM76</accession>
<dbReference type="EC" id="2.7.1.33" evidence="1"/>
<dbReference type="EMBL" id="CP000084">
    <property type="protein sequence ID" value="AAZ21713.1"/>
    <property type="molecule type" value="Genomic_DNA"/>
</dbReference>
<dbReference type="RefSeq" id="WP_006997021.1">
    <property type="nucleotide sequence ID" value="NC_007205.1"/>
</dbReference>
<dbReference type="SMR" id="Q4FM76"/>
<dbReference type="STRING" id="335992.SAR11_0899"/>
<dbReference type="GeneID" id="66295393"/>
<dbReference type="KEGG" id="pub:SAR11_0899"/>
<dbReference type="eggNOG" id="COG1521">
    <property type="taxonomic scope" value="Bacteria"/>
</dbReference>
<dbReference type="HOGENOM" id="CLU_066627_1_1_5"/>
<dbReference type="OrthoDB" id="9804707at2"/>
<dbReference type="UniPathway" id="UPA00241">
    <property type="reaction ID" value="UER00352"/>
</dbReference>
<dbReference type="Proteomes" id="UP000002528">
    <property type="component" value="Chromosome"/>
</dbReference>
<dbReference type="GO" id="GO:0005737">
    <property type="term" value="C:cytoplasm"/>
    <property type="evidence" value="ECO:0007669"/>
    <property type="project" value="UniProtKB-SubCell"/>
</dbReference>
<dbReference type="GO" id="GO:0005524">
    <property type="term" value="F:ATP binding"/>
    <property type="evidence" value="ECO:0007669"/>
    <property type="project" value="UniProtKB-UniRule"/>
</dbReference>
<dbReference type="GO" id="GO:0046872">
    <property type="term" value="F:metal ion binding"/>
    <property type="evidence" value="ECO:0007669"/>
    <property type="project" value="UniProtKB-KW"/>
</dbReference>
<dbReference type="GO" id="GO:0004594">
    <property type="term" value="F:pantothenate kinase activity"/>
    <property type="evidence" value="ECO:0007669"/>
    <property type="project" value="UniProtKB-UniRule"/>
</dbReference>
<dbReference type="GO" id="GO:0015937">
    <property type="term" value="P:coenzyme A biosynthetic process"/>
    <property type="evidence" value="ECO:0007669"/>
    <property type="project" value="UniProtKB-UniRule"/>
</dbReference>
<dbReference type="CDD" id="cd24015">
    <property type="entry name" value="ASKHA_NBD_PanK-III"/>
    <property type="match status" value="1"/>
</dbReference>
<dbReference type="Gene3D" id="3.30.420.40">
    <property type="match status" value="2"/>
</dbReference>
<dbReference type="HAMAP" id="MF_01274">
    <property type="entry name" value="Pantothen_kinase_3"/>
    <property type="match status" value="1"/>
</dbReference>
<dbReference type="InterPro" id="IPR043129">
    <property type="entry name" value="ATPase_NBD"/>
</dbReference>
<dbReference type="InterPro" id="IPR004619">
    <property type="entry name" value="Type_III_PanK"/>
</dbReference>
<dbReference type="NCBIfam" id="TIGR00671">
    <property type="entry name" value="baf"/>
    <property type="match status" value="1"/>
</dbReference>
<dbReference type="PANTHER" id="PTHR34265">
    <property type="entry name" value="TYPE III PANTOTHENATE KINASE"/>
    <property type="match status" value="1"/>
</dbReference>
<dbReference type="PANTHER" id="PTHR34265:SF1">
    <property type="entry name" value="TYPE III PANTOTHENATE KINASE"/>
    <property type="match status" value="1"/>
</dbReference>
<dbReference type="Pfam" id="PF03309">
    <property type="entry name" value="Pan_kinase"/>
    <property type="match status" value="1"/>
</dbReference>
<dbReference type="SUPFAM" id="SSF53067">
    <property type="entry name" value="Actin-like ATPase domain"/>
    <property type="match status" value="2"/>
</dbReference>
<keyword id="KW-0067">ATP-binding</keyword>
<keyword id="KW-0173">Coenzyme A biosynthesis</keyword>
<keyword id="KW-0963">Cytoplasm</keyword>
<keyword id="KW-0418">Kinase</keyword>
<keyword id="KW-0479">Metal-binding</keyword>
<keyword id="KW-0547">Nucleotide-binding</keyword>
<keyword id="KW-0630">Potassium</keyword>
<keyword id="KW-1185">Reference proteome</keyword>
<keyword id="KW-0808">Transferase</keyword>
<sequence length="248" mass="27648">MIIVGDIGNTETKICLVNSKNIIIKRVILLTKKINHSSLNKSLLGLNLKNKSINKCLFCSVVPKKFNAVKIFFKKVYKIKCHELKKLNLNKLIKIKVNYKQIGSDRLANAISIINNKDNFIILDFGTATTFDVLIKNTYHGGVIAPGVKLSLDTLTDKASQIPKINLKKTNRVIGLNTISAVRAGFFWGYEGLIDNIVNLIKKETKMSFKIIITGGFSGLFKNSIKTKVTLNKDITIKGLIRATTLIK</sequence>
<organism>
    <name type="scientific">Pelagibacter ubique (strain HTCC1062)</name>
    <dbReference type="NCBI Taxonomy" id="335992"/>
    <lineage>
        <taxon>Bacteria</taxon>
        <taxon>Pseudomonadati</taxon>
        <taxon>Pseudomonadota</taxon>
        <taxon>Alphaproteobacteria</taxon>
        <taxon>Candidatus Pelagibacterales</taxon>
        <taxon>Candidatus Pelagibacteraceae</taxon>
        <taxon>Candidatus Pelagibacter</taxon>
    </lineage>
</organism>
<evidence type="ECO:0000255" key="1">
    <source>
        <dbReference type="HAMAP-Rule" id="MF_01274"/>
    </source>
</evidence>
<protein>
    <recommendedName>
        <fullName evidence="1">Type III pantothenate kinase</fullName>
        <ecNumber evidence="1">2.7.1.33</ecNumber>
    </recommendedName>
    <alternativeName>
        <fullName evidence="1">PanK-III</fullName>
    </alternativeName>
    <alternativeName>
        <fullName evidence="1">Pantothenic acid kinase</fullName>
    </alternativeName>
</protein>
<proteinExistence type="inferred from homology"/>
<reference key="1">
    <citation type="journal article" date="2005" name="Science">
        <title>Genome streamlining in a cosmopolitan oceanic bacterium.</title>
        <authorList>
            <person name="Giovannoni S.J."/>
            <person name="Tripp H.J."/>
            <person name="Givan S."/>
            <person name="Podar M."/>
            <person name="Vergin K.L."/>
            <person name="Baptista D."/>
            <person name="Bibbs L."/>
            <person name="Eads J."/>
            <person name="Richardson T.H."/>
            <person name="Noordewier M."/>
            <person name="Rappe M.S."/>
            <person name="Short J.M."/>
            <person name="Carrington J.C."/>
            <person name="Mathur E.J."/>
        </authorList>
    </citation>
    <scope>NUCLEOTIDE SEQUENCE [LARGE SCALE GENOMIC DNA]</scope>
    <source>
        <strain>HTCC1062</strain>
    </source>
</reference>